<gene>
    <name type="primary">korC</name>
    <name type="ordered locus">MJ0536</name>
</gene>
<evidence type="ECO:0000250" key="1"/>
<keyword id="KW-0560">Oxidoreductase</keyword>
<keyword id="KW-1185">Reference proteome</keyword>
<proteinExistence type="inferred from homology"/>
<reference key="1">
    <citation type="journal article" date="1996" name="Science">
        <title>Complete genome sequence of the methanogenic archaeon, Methanococcus jannaschii.</title>
        <authorList>
            <person name="Bult C.J."/>
            <person name="White O."/>
            <person name="Olsen G.J."/>
            <person name="Zhou L."/>
            <person name="Fleischmann R.D."/>
            <person name="Sutton G.G."/>
            <person name="Blake J.A."/>
            <person name="FitzGerald L.M."/>
            <person name="Clayton R.A."/>
            <person name="Gocayne J.D."/>
            <person name="Kerlavage A.R."/>
            <person name="Dougherty B.A."/>
            <person name="Tomb J.-F."/>
            <person name="Adams M.D."/>
            <person name="Reich C.I."/>
            <person name="Overbeek R."/>
            <person name="Kirkness E.F."/>
            <person name="Weinstock K.G."/>
            <person name="Merrick J.M."/>
            <person name="Glodek A."/>
            <person name="Scott J.L."/>
            <person name="Geoghagen N.S.M."/>
            <person name="Weidman J.F."/>
            <person name="Fuhrmann J.L."/>
            <person name="Nguyen D."/>
            <person name="Utterback T.R."/>
            <person name="Kelley J.M."/>
            <person name="Peterson J.D."/>
            <person name="Sadow P.W."/>
            <person name="Hanna M.C."/>
            <person name="Cotton M.D."/>
            <person name="Roberts K.M."/>
            <person name="Hurst M.A."/>
            <person name="Kaine B.P."/>
            <person name="Borodovsky M."/>
            <person name="Klenk H.-P."/>
            <person name="Fraser C.M."/>
            <person name="Smith H.O."/>
            <person name="Woese C.R."/>
            <person name="Venter J.C."/>
        </authorList>
    </citation>
    <scope>NUCLEOTIDE SEQUENCE [LARGE SCALE GENOMIC DNA]</scope>
    <source>
        <strain>ATCC 43067 / DSM 2661 / JAL-1 / JCM 10045 / NBRC 100440</strain>
    </source>
</reference>
<accession>Q57956</accession>
<comment type="catalytic activity">
    <reaction>
        <text>2 oxidized [2Fe-2S]-[ferredoxin] + 2-oxoglutarate + CoA = succinyl-CoA + 2 reduced [2Fe-2S]-[ferredoxin] + CO2 + H(+)</text>
        <dbReference type="Rhea" id="RHEA:17297"/>
        <dbReference type="Rhea" id="RHEA-COMP:10000"/>
        <dbReference type="Rhea" id="RHEA-COMP:10001"/>
        <dbReference type="ChEBI" id="CHEBI:15378"/>
        <dbReference type="ChEBI" id="CHEBI:16526"/>
        <dbReference type="ChEBI" id="CHEBI:16810"/>
        <dbReference type="ChEBI" id="CHEBI:33737"/>
        <dbReference type="ChEBI" id="CHEBI:33738"/>
        <dbReference type="ChEBI" id="CHEBI:57287"/>
        <dbReference type="ChEBI" id="CHEBI:57292"/>
        <dbReference type="EC" id="1.2.7.3"/>
    </reaction>
</comment>
<comment type="subunit">
    <text evidence="1">Heterotetramer of the KorA, KorB, KorC and KorD subunits.</text>
</comment>
<organism>
    <name type="scientific">Methanocaldococcus jannaschii (strain ATCC 43067 / DSM 2661 / JAL-1 / JCM 10045 / NBRC 100440)</name>
    <name type="common">Methanococcus jannaschii</name>
    <dbReference type="NCBI Taxonomy" id="243232"/>
    <lineage>
        <taxon>Archaea</taxon>
        <taxon>Methanobacteriati</taxon>
        <taxon>Methanobacteriota</taxon>
        <taxon>Methanomada group</taxon>
        <taxon>Methanococci</taxon>
        <taxon>Methanococcales</taxon>
        <taxon>Methanocaldococcaceae</taxon>
        <taxon>Methanocaldococcus</taxon>
    </lineage>
</organism>
<name>KORC_METJA</name>
<sequence length="187" mass="20548">MNKRRVKMRKEIRLSGFGGQGIILAGVILGRAAALYDNKEAVQTQSYGPEARGGASKSEVVISDEPIDFPKVIKPDILVCLSQQAYDKYKDDIKEGGVVLVDEDLVSTDKMPEVDVTMYKIPFTRIASEEIKLPIVANIVMLGALTRLTNIVSKESMEKAILDSVPKGTEEKNLLAFSKGYEVAKEL</sequence>
<feature type="chain" id="PRO_0000099946" description="2-oxoglutarate synthase subunit KorC">
    <location>
        <begin position="1"/>
        <end position="187"/>
    </location>
</feature>
<protein>
    <recommendedName>
        <fullName>2-oxoglutarate synthase subunit KorC</fullName>
        <ecNumber>1.2.7.3</ecNumber>
    </recommendedName>
    <alternativeName>
        <fullName>2-ketoglutarate oxidoreductase gamma chain</fullName>
        <shortName>KOR</shortName>
    </alternativeName>
    <alternativeName>
        <fullName>2-oxoglutarate-ferredoxin oxidoreductase subunit gamma</fullName>
    </alternativeName>
</protein>
<dbReference type="EC" id="1.2.7.3"/>
<dbReference type="EMBL" id="L77117">
    <property type="protein sequence ID" value="AAB98530.1"/>
    <property type="molecule type" value="Genomic_DNA"/>
</dbReference>
<dbReference type="PIR" id="H64366">
    <property type="entry name" value="H64366"/>
</dbReference>
<dbReference type="SMR" id="Q57956"/>
<dbReference type="FunCoup" id="Q57956">
    <property type="interactions" value="90"/>
</dbReference>
<dbReference type="STRING" id="243232.MJ_0536"/>
<dbReference type="PaxDb" id="243232-MJ_0536"/>
<dbReference type="EnsemblBacteria" id="AAB98530">
    <property type="protein sequence ID" value="AAB98530"/>
    <property type="gene ID" value="MJ_0536"/>
</dbReference>
<dbReference type="KEGG" id="mja:MJ_0536"/>
<dbReference type="eggNOG" id="arCOG01602">
    <property type="taxonomic scope" value="Archaea"/>
</dbReference>
<dbReference type="HOGENOM" id="CLU_087284_0_0_2"/>
<dbReference type="InParanoid" id="Q57956"/>
<dbReference type="PhylomeDB" id="Q57956"/>
<dbReference type="Proteomes" id="UP000000805">
    <property type="component" value="Chromosome"/>
</dbReference>
<dbReference type="GO" id="GO:0047553">
    <property type="term" value="F:2-oxoglutarate synthase activity"/>
    <property type="evidence" value="ECO:0007669"/>
    <property type="project" value="UniProtKB-EC"/>
</dbReference>
<dbReference type="Gene3D" id="3.40.920.10">
    <property type="entry name" value="Pyruvate-ferredoxin oxidoreductase, PFOR, domain III"/>
    <property type="match status" value="1"/>
</dbReference>
<dbReference type="InterPro" id="IPR052554">
    <property type="entry name" value="2-oxoglutarate_synth_KorC"/>
</dbReference>
<dbReference type="InterPro" id="IPR011894">
    <property type="entry name" value="PorC_KorC"/>
</dbReference>
<dbReference type="InterPro" id="IPR019752">
    <property type="entry name" value="Pyrv/ketoisovalerate_OxRed_cat"/>
</dbReference>
<dbReference type="InterPro" id="IPR002869">
    <property type="entry name" value="Pyrv_flavodox_OxRed_cen"/>
</dbReference>
<dbReference type="NCBIfam" id="TIGR02175">
    <property type="entry name" value="PorC_KorC"/>
    <property type="match status" value="1"/>
</dbReference>
<dbReference type="NCBIfam" id="NF006323">
    <property type="entry name" value="PRK08537.1"/>
    <property type="match status" value="1"/>
</dbReference>
<dbReference type="PANTHER" id="PTHR42730">
    <property type="entry name" value="2-OXOGLUTARATE SYNTHASE SUBUNIT KORC"/>
    <property type="match status" value="1"/>
</dbReference>
<dbReference type="PANTHER" id="PTHR42730:SF1">
    <property type="entry name" value="2-OXOGLUTARATE SYNTHASE SUBUNIT KORC"/>
    <property type="match status" value="1"/>
</dbReference>
<dbReference type="Pfam" id="PF01558">
    <property type="entry name" value="POR"/>
    <property type="match status" value="1"/>
</dbReference>
<dbReference type="SUPFAM" id="SSF53323">
    <property type="entry name" value="Pyruvate-ferredoxin oxidoreductase, PFOR, domain III"/>
    <property type="match status" value="1"/>
</dbReference>